<organism>
    <name type="scientific">Synechocystis sp. (strain ATCC 27184 / PCC 6803 / Kazusa)</name>
    <dbReference type="NCBI Taxonomy" id="1111708"/>
    <lineage>
        <taxon>Bacteria</taxon>
        <taxon>Bacillati</taxon>
        <taxon>Cyanobacteriota</taxon>
        <taxon>Cyanophyceae</taxon>
        <taxon>Synechococcales</taxon>
        <taxon>Merismopediaceae</taxon>
        <taxon>Synechocystis</taxon>
    </lineage>
</organism>
<keyword id="KW-0413">Isomerase</keyword>
<keyword id="KW-1185">Reference proteome</keyword>
<keyword id="KW-0819">tRNA processing</keyword>
<sequence length="296" mass="32113">MFGFLNLHKPLHLTSHDCVAKVRRLLRQKRVGHGGTLDPLAEGVLPLAVGSATRLLPYLPGAKQYQALIRFGVRTDSDDLAGEVLESKNVSYLTLAAVEQILPTFLGEIEQIPPQYSAIQVNGKRLYELARAGIPQAVPSRMVTINDLKILGWRSGNQPELDLQVTCGEGTYIRALARDLGDRLGTGATLAGLVRQQSGGMALDNSVGLTALEKIVAEEEHIPLIPPQEALSHLPTVQLNSELEKRWFHGQRLLLPDLPVGVVLITSELGPVKCLGVALVTPEDHGTVLRPKVVLN</sequence>
<name>TRUB_SYNY3</name>
<protein>
    <recommendedName>
        <fullName evidence="1">tRNA pseudouridine synthase B</fullName>
        <ecNumber evidence="1">5.4.99.25</ecNumber>
    </recommendedName>
    <alternativeName>
        <fullName evidence="1">tRNA pseudouridine(55) synthase</fullName>
        <shortName evidence="1">Psi55 synthase</shortName>
    </alternativeName>
    <alternativeName>
        <fullName evidence="1">tRNA pseudouridylate synthase</fullName>
    </alternativeName>
    <alternativeName>
        <fullName evidence="1">tRNA-uridine isomerase</fullName>
    </alternativeName>
</protein>
<evidence type="ECO:0000255" key="1">
    <source>
        <dbReference type="HAMAP-Rule" id="MF_01080"/>
    </source>
</evidence>
<reference key="1">
    <citation type="journal article" date="1996" name="DNA Res.">
        <title>Sequence analysis of the genome of the unicellular cyanobacterium Synechocystis sp. strain PCC6803. II. Sequence determination of the entire genome and assignment of potential protein-coding regions.</title>
        <authorList>
            <person name="Kaneko T."/>
            <person name="Sato S."/>
            <person name="Kotani H."/>
            <person name="Tanaka A."/>
            <person name="Asamizu E."/>
            <person name="Nakamura Y."/>
            <person name="Miyajima N."/>
            <person name="Hirosawa M."/>
            <person name="Sugiura M."/>
            <person name="Sasamoto S."/>
            <person name="Kimura T."/>
            <person name="Hosouchi T."/>
            <person name="Matsuno A."/>
            <person name="Muraki A."/>
            <person name="Nakazaki N."/>
            <person name="Naruo K."/>
            <person name="Okumura S."/>
            <person name="Shimpo S."/>
            <person name="Takeuchi C."/>
            <person name="Wada T."/>
            <person name="Watanabe A."/>
            <person name="Yamada M."/>
            <person name="Yasuda M."/>
            <person name="Tabata S."/>
        </authorList>
    </citation>
    <scope>NUCLEOTIDE SEQUENCE [LARGE SCALE GENOMIC DNA]</scope>
    <source>
        <strain>ATCC 27184 / PCC 6803 / Kazusa</strain>
    </source>
</reference>
<gene>
    <name evidence="1" type="primary">truB</name>
    <name type="ordered locus">slr0457</name>
</gene>
<accession>P74696</accession>
<dbReference type="EC" id="5.4.99.25" evidence="1"/>
<dbReference type="EMBL" id="BA000022">
    <property type="protein sequence ID" value="BAA18814.1"/>
    <property type="molecule type" value="Genomic_DNA"/>
</dbReference>
<dbReference type="PIR" id="S76902">
    <property type="entry name" value="S76902"/>
</dbReference>
<dbReference type="SMR" id="P74696"/>
<dbReference type="FunCoup" id="P74696">
    <property type="interactions" value="375"/>
</dbReference>
<dbReference type="IntAct" id="P74696">
    <property type="interactions" value="1"/>
</dbReference>
<dbReference type="STRING" id="1148.gene:10500586"/>
<dbReference type="PaxDb" id="1148-1653904"/>
<dbReference type="EnsemblBacteria" id="BAA18814">
    <property type="protein sequence ID" value="BAA18814"/>
    <property type="gene ID" value="BAA18814"/>
</dbReference>
<dbReference type="KEGG" id="syn:slr0457"/>
<dbReference type="eggNOG" id="COG0130">
    <property type="taxonomic scope" value="Bacteria"/>
</dbReference>
<dbReference type="InParanoid" id="P74696"/>
<dbReference type="PhylomeDB" id="P74696"/>
<dbReference type="Proteomes" id="UP000001425">
    <property type="component" value="Chromosome"/>
</dbReference>
<dbReference type="GO" id="GO:0009982">
    <property type="term" value="F:pseudouridine synthase activity"/>
    <property type="evidence" value="ECO:0000318"/>
    <property type="project" value="GO_Central"/>
</dbReference>
<dbReference type="GO" id="GO:0003723">
    <property type="term" value="F:RNA binding"/>
    <property type="evidence" value="ECO:0007669"/>
    <property type="project" value="InterPro"/>
</dbReference>
<dbReference type="GO" id="GO:0160148">
    <property type="term" value="F:tRNA pseudouridine(55) synthase activity"/>
    <property type="evidence" value="ECO:0007669"/>
    <property type="project" value="UniProtKB-EC"/>
</dbReference>
<dbReference type="GO" id="GO:1990481">
    <property type="term" value="P:mRNA pseudouridine synthesis"/>
    <property type="evidence" value="ECO:0000318"/>
    <property type="project" value="GO_Central"/>
</dbReference>
<dbReference type="GO" id="GO:0006400">
    <property type="term" value="P:tRNA modification"/>
    <property type="evidence" value="ECO:0000318"/>
    <property type="project" value="GO_Central"/>
</dbReference>
<dbReference type="GO" id="GO:0031119">
    <property type="term" value="P:tRNA pseudouridine synthesis"/>
    <property type="evidence" value="ECO:0007669"/>
    <property type="project" value="UniProtKB-UniRule"/>
</dbReference>
<dbReference type="CDD" id="cd02573">
    <property type="entry name" value="PseudoU_synth_EcTruB"/>
    <property type="match status" value="1"/>
</dbReference>
<dbReference type="FunFam" id="3.30.2350.10:FF:000050">
    <property type="entry name" value="tRNA pseudouridine synthase B"/>
    <property type="match status" value="1"/>
</dbReference>
<dbReference type="Gene3D" id="3.30.2350.10">
    <property type="entry name" value="Pseudouridine synthase"/>
    <property type="match status" value="1"/>
</dbReference>
<dbReference type="HAMAP" id="MF_01080">
    <property type="entry name" value="TruB_bact"/>
    <property type="match status" value="1"/>
</dbReference>
<dbReference type="InterPro" id="IPR020103">
    <property type="entry name" value="PsdUridine_synth_cat_dom_sf"/>
</dbReference>
<dbReference type="InterPro" id="IPR002501">
    <property type="entry name" value="PsdUridine_synth_N"/>
</dbReference>
<dbReference type="InterPro" id="IPR014780">
    <property type="entry name" value="tRNA_psdUridine_synth_TruB"/>
</dbReference>
<dbReference type="NCBIfam" id="TIGR00431">
    <property type="entry name" value="TruB"/>
    <property type="match status" value="1"/>
</dbReference>
<dbReference type="PANTHER" id="PTHR13767:SF2">
    <property type="entry name" value="PSEUDOURIDYLATE SYNTHASE TRUB1"/>
    <property type="match status" value="1"/>
</dbReference>
<dbReference type="PANTHER" id="PTHR13767">
    <property type="entry name" value="TRNA-PSEUDOURIDINE SYNTHASE"/>
    <property type="match status" value="1"/>
</dbReference>
<dbReference type="Pfam" id="PF01509">
    <property type="entry name" value="TruB_N"/>
    <property type="match status" value="1"/>
</dbReference>
<dbReference type="SUPFAM" id="SSF55120">
    <property type="entry name" value="Pseudouridine synthase"/>
    <property type="match status" value="1"/>
</dbReference>
<feature type="chain" id="PRO_0000121928" description="tRNA pseudouridine synthase B">
    <location>
        <begin position="1"/>
        <end position="296"/>
    </location>
</feature>
<feature type="active site" description="Nucleophile" evidence="1">
    <location>
        <position position="38"/>
    </location>
</feature>
<comment type="function">
    <text evidence="1">Responsible for synthesis of pseudouridine from uracil-55 in the psi GC loop of transfer RNAs.</text>
</comment>
<comment type="catalytic activity">
    <reaction evidence="1">
        <text>uridine(55) in tRNA = pseudouridine(55) in tRNA</text>
        <dbReference type="Rhea" id="RHEA:42532"/>
        <dbReference type="Rhea" id="RHEA-COMP:10101"/>
        <dbReference type="Rhea" id="RHEA-COMP:10102"/>
        <dbReference type="ChEBI" id="CHEBI:65314"/>
        <dbReference type="ChEBI" id="CHEBI:65315"/>
        <dbReference type="EC" id="5.4.99.25"/>
    </reaction>
</comment>
<comment type="similarity">
    <text evidence="1">Belongs to the pseudouridine synthase TruB family. Type 1 subfamily.</text>
</comment>
<proteinExistence type="inferred from homology"/>